<proteinExistence type="inferred from homology"/>
<dbReference type="EC" id="1.2.1.103" evidence="1"/>
<dbReference type="EC" id="1.2.1.106" evidence="1"/>
<dbReference type="EMBL" id="AE009950">
    <property type="protein sequence ID" value="AAL81807.1"/>
    <property type="molecule type" value="Genomic_DNA"/>
</dbReference>
<dbReference type="SMR" id="Q8U0B6"/>
<dbReference type="IntAct" id="Q8U0B6">
    <property type="interactions" value="1"/>
</dbReference>
<dbReference type="STRING" id="186497.PF1683"/>
<dbReference type="PaxDb" id="186497-PF1683"/>
<dbReference type="KEGG" id="pfu:PF1683"/>
<dbReference type="PATRIC" id="fig|186497.12.peg.1751"/>
<dbReference type="eggNOG" id="arCOG00495">
    <property type="taxonomic scope" value="Archaea"/>
</dbReference>
<dbReference type="HOGENOM" id="CLU_006384_0_1_2"/>
<dbReference type="OrthoDB" id="372053at2157"/>
<dbReference type="PhylomeDB" id="Q8U0B6"/>
<dbReference type="UniPathway" id="UPA00033">
    <property type="reaction ID" value="UER00037"/>
</dbReference>
<dbReference type="UniPathway" id="UPA00068"/>
<dbReference type="Proteomes" id="UP000001013">
    <property type="component" value="Chromosome"/>
</dbReference>
<dbReference type="GO" id="GO:0005737">
    <property type="term" value="C:cytoplasm"/>
    <property type="evidence" value="ECO:0007669"/>
    <property type="project" value="UniProtKB-SubCell"/>
</dbReference>
<dbReference type="GO" id="GO:0043870">
    <property type="term" value="F:N-acetyl-gamma-aminoadipyl-phosphate reductase activity"/>
    <property type="evidence" value="ECO:0007669"/>
    <property type="project" value="RHEA"/>
</dbReference>
<dbReference type="GO" id="GO:0003942">
    <property type="term" value="F:N-acetyl-gamma-glutamyl-phosphate reductase activity"/>
    <property type="evidence" value="ECO:0007669"/>
    <property type="project" value="InterPro"/>
</dbReference>
<dbReference type="GO" id="GO:0051287">
    <property type="term" value="F:NAD binding"/>
    <property type="evidence" value="ECO:0007669"/>
    <property type="project" value="InterPro"/>
</dbReference>
<dbReference type="GO" id="GO:0070401">
    <property type="term" value="F:NADP+ binding"/>
    <property type="evidence" value="ECO:0007669"/>
    <property type="project" value="InterPro"/>
</dbReference>
<dbReference type="GO" id="GO:0042450">
    <property type="term" value="P:arginine biosynthetic process via ornithine"/>
    <property type="evidence" value="ECO:0007669"/>
    <property type="project" value="UniProtKB-UniRule"/>
</dbReference>
<dbReference type="GO" id="GO:0006526">
    <property type="term" value="P:L-arginine biosynthetic process"/>
    <property type="evidence" value="ECO:0007669"/>
    <property type="project" value="UniProtKB-UniPathway"/>
</dbReference>
<dbReference type="GO" id="GO:0019878">
    <property type="term" value="P:lysine biosynthetic process via aminoadipic acid"/>
    <property type="evidence" value="ECO:0007669"/>
    <property type="project" value="UniProtKB-UniRule"/>
</dbReference>
<dbReference type="CDD" id="cd23939">
    <property type="entry name" value="AGPR_1_C_LysY"/>
    <property type="match status" value="1"/>
</dbReference>
<dbReference type="CDD" id="cd17895">
    <property type="entry name" value="AGPR_1_N"/>
    <property type="match status" value="1"/>
</dbReference>
<dbReference type="Gene3D" id="3.30.360.10">
    <property type="entry name" value="Dihydrodipicolinate Reductase, domain 2"/>
    <property type="match status" value="1"/>
</dbReference>
<dbReference type="Gene3D" id="3.40.50.720">
    <property type="entry name" value="NAD(P)-binding Rossmann-like Domain"/>
    <property type="match status" value="1"/>
</dbReference>
<dbReference type="HAMAP" id="MF_00150">
    <property type="entry name" value="ArgC_type1"/>
    <property type="match status" value="1"/>
</dbReference>
<dbReference type="HAMAP" id="MF_02083">
    <property type="entry name" value="LysY"/>
    <property type="match status" value="1"/>
</dbReference>
<dbReference type="InterPro" id="IPR023013">
    <property type="entry name" value="AGPR_AS"/>
</dbReference>
<dbReference type="InterPro" id="IPR000706">
    <property type="entry name" value="AGPR_type-1"/>
</dbReference>
<dbReference type="InterPro" id="IPR037535">
    <property type="entry name" value="LysY"/>
</dbReference>
<dbReference type="InterPro" id="IPR036291">
    <property type="entry name" value="NAD(P)-bd_dom_sf"/>
</dbReference>
<dbReference type="InterPro" id="IPR050085">
    <property type="entry name" value="NAGSA_dehydrogenase"/>
</dbReference>
<dbReference type="InterPro" id="IPR000534">
    <property type="entry name" value="Semialdehyde_DH_NAD-bd"/>
</dbReference>
<dbReference type="NCBIfam" id="TIGR01850">
    <property type="entry name" value="argC"/>
    <property type="match status" value="1"/>
</dbReference>
<dbReference type="PANTHER" id="PTHR32338:SF11">
    <property type="entry name" value="[LYSW]-L-2-AMINOADIPATE_[LYSW]-L-GLUTAMATE PHOSPHATE REDUCTASE-RELATED"/>
    <property type="match status" value="1"/>
</dbReference>
<dbReference type="PANTHER" id="PTHR32338">
    <property type="entry name" value="N-ACETYL-GAMMA-GLUTAMYL-PHOSPHATE REDUCTASE, CHLOROPLASTIC-RELATED-RELATED"/>
    <property type="match status" value="1"/>
</dbReference>
<dbReference type="Pfam" id="PF01118">
    <property type="entry name" value="Semialdhyde_dh"/>
    <property type="match status" value="1"/>
</dbReference>
<dbReference type="Pfam" id="PF22698">
    <property type="entry name" value="Semialdhyde_dhC_1"/>
    <property type="match status" value="1"/>
</dbReference>
<dbReference type="SMART" id="SM00859">
    <property type="entry name" value="Semialdhyde_dh"/>
    <property type="match status" value="1"/>
</dbReference>
<dbReference type="SUPFAM" id="SSF55347">
    <property type="entry name" value="Glyceraldehyde-3-phosphate dehydrogenase-like, C-terminal domain"/>
    <property type="match status" value="1"/>
</dbReference>
<dbReference type="SUPFAM" id="SSF51735">
    <property type="entry name" value="NAD(P)-binding Rossmann-fold domains"/>
    <property type="match status" value="1"/>
</dbReference>
<dbReference type="PROSITE" id="PS01224">
    <property type="entry name" value="ARGC"/>
    <property type="match status" value="1"/>
</dbReference>
<accession>Q8U0B6</accession>
<feature type="chain" id="PRO_0000112494" description="Putative [LysW]-L-2-aminoadipate/[LysW]-L-glutamate phosphate reductase">
    <location>
        <begin position="1"/>
        <end position="330"/>
    </location>
</feature>
<feature type="active site" evidence="1">
    <location>
        <position position="142"/>
    </location>
</feature>
<feature type="binding site" evidence="1">
    <location>
        <begin position="10"/>
        <end position="13"/>
    </location>
    <ligand>
        <name>NADP(+)</name>
        <dbReference type="ChEBI" id="CHEBI:58349"/>
    </ligand>
</feature>
<feature type="binding site" evidence="1">
    <location>
        <position position="297"/>
    </location>
    <ligand>
        <name>NADP(+)</name>
        <dbReference type="ChEBI" id="CHEBI:58349"/>
    </ligand>
</feature>
<evidence type="ECO:0000255" key="1">
    <source>
        <dbReference type="HAMAP-Rule" id="MF_02083"/>
    </source>
</evidence>
<comment type="function">
    <text evidence="1">Involved in both the arginine and lysine biosynthetic pathways.</text>
</comment>
<comment type="catalytic activity">
    <reaction evidence="1">
        <text>[amino-group carrier protein]-C-terminal-N-(1-carboxy-5-oxopentan-1-yl)-L-glutamine + phosphate + NADP(+) = [amino-group carrier protein]-C-terminal-N-(1-carboxy-5-phosphooxy-5-oxopentan-1-yl)-L-glutamine + NADPH + H(+)</text>
        <dbReference type="Rhea" id="RHEA:41948"/>
        <dbReference type="Rhea" id="RHEA-COMP:9712"/>
        <dbReference type="Rhea" id="RHEA-COMP:9714"/>
        <dbReference type="ChEBI" id="CHEBI:15378"/>
        <dbReference type="ChEBI" id="CHEBI:43474"/>
        <dbReference type="ChEBI" id="CHEBI:57783"/>
        <dbReference type="ChEBI" id="CHEBI:58349"/>
        <dbReference type="ChEBI" id="CHEBI:78499"/>
        <dbReference type="ChEBI" id="CHEBI:78501"/>
        <dbReference type="EC" id="1.2.1.103"/>
    </reaction>
</comment>
<comment type="catalytic activity">
    <reaction evidence="1">
        <text>[amino-group carrier protein]-C-terminal-gamma-(L-glutamyl-5-semialdehyde)-L-glutamate + phosphate + NADP(+) = [amino-group carrier protein]-C-terminal-gamma-(5-phospho-L-glutamyl)-L-glutamate + NADPH + H(+)</text>
        <dbReference type="Rhea" id="RHEA:52668"/>
        <dbReference type="Rhea" id="RHEA-COMP:13313"/>
        <dbReference type="Rhea" id="RHEA-COMP:13327"/>
        <dbReference type="ChEBI" id="CHEBI:15378"/>
        <dbReference type="ChEBI" id="CHEBI:43474"/>
        <dbReference type="ChEBI" id="CHEBI:57783"/>
        <dbReference type="ChEBI" id="CHEBI:58349"/>
        <dbReference type="ChEBI" id="CHEBI:136717"/>
        <dbReference type="ChEBI" id="CHEBI:136761"/>
        <dbReference type="EC" id="1.2.1.106"/>
    </reaction>
</comment>
<comment type="pathway">
    <text evidence="1">Amino-acid biosynthesis; L-lysine biosynthesis via AAA pathway; L-lysine from L-alpha-aminoadipate (Thermus route): step 3/5.</text>
</comment>
<comment type="pathway">
    <text evidence="1">Amino-acid biosynthesis; L-arginine biosynthesis.</text>
</comment>
<comment type="subcellular location">
    <subcellularLocation>
        <location evidence="1">Cytoplasm</location>
    </subcellularLocation>
</comment>
<comment type="similarity">
    <text evidence="1">Belongs to the NAGSA dehydrogenase family. Type 1 subfamily. LysY sub-subfamily.</text>
</comment>
<gene>
    <name evidence="1" type="primary">lysY</name>
    <name type="ordered locus">PF1683</name>
</gene>
<name>LYSY_PYRFU</name>
<sequence length="330" mass="37349">MIKAAVVGASGYIGGELVRLLAMHPEVEITAITSRQYAGKKVHKVHPNLRGLDLRFTNDYNFDADVIFLAVPHGTSMKIIEEFLGSAKIIDMSADFRIKKELYEKYYGPHEKPELIDRFTYGLPELHRKEIKKAELVANPGCNATATILGLYPFKDLTQEAIVDLKVSSSAGGRRENIASIHPERSNVVRVYKPYHHRHEAEVLQETRVKAMFTVHSVDLVRGLLATIYFRYEGNERELLRKLLMYKDEPFVRIVTDKGGLQRYPDPKYVIGSNFIDIGFAYDSENSRVMVFSAIDNLIKGGAGQAVQNMNIMFGLKETTGLEYYPVYPV</sequence>
<protein>
    <recommendedName>
        <fullName evidence="1">Putative [LysW]-L-2-aminoadipate/[LysW]-L-glutamate phosphate reductase</fullName>
        <ecNumber evidence="1">1.2.1.103</ecNumber>
        <ecNumber evidence="1">1.2.1.106</ecNumber>
    </recommendedName>
</protein>
<organism>
    <name type="scientific">Pyrococcus furiosus (strain ATCC 43587 / DSM 3638 / JCM 8422 / Vc1)</name>
    <dbReference type="NCBI Taxonomy" id="186497"/>
    <lineage>
        <taxon>Archaea</taxon>
        <taxon>Methanobacteriati</taxon>
        <taxon>Methanobacteriota</taxon>
        <taxon>Thermococci</taxon>
        <taxon>Thermococcales</taxon>
        <taxon>Thermococcaceae</taxon>
        <taxon>Pyrococcus</taxon>
    </lineage>
</organism>
<keyword id="KW-0028">Amino-acid biosynthesis</keyword>
<keyword id="KW-0055">Arginine biosynthesis</keyword>
<keyword id="KW-0963">Cytoplasm</keyword>
<keyword id="KW-0457">Lysine biosynthesis</keyword>
<keyword id="KW-0521">NADP</keyword>
<keyword id="KW-0560">Oxidoreductase</keyword>
<keyword id="KW-1185">Reference proteome</keyword>
<reference key="1">
    <citation type="journal article" date="1999" name="Genetics">
        <title>Divergence of the hyperthermophilic archaea Pyrococcus furiosus and P. horikoshii inferred from complete genomic sequences.</title>
        <authorList>
            <person name="Maeder D.L."/>
            <person name="Weiss R.B."/>
            <person name="Dunn D.M."/>
            <person name="Cherry J.L."/>
            <person name="Gonzalez J.M."/>
            <person name="DiRuggiero J."/>
            <person name="Robb F.T."/>
        </authorList>
    </citation>
    <scope>NUCLEOTIDE SEQUENCE [LARGE SCALE GENOMIC DNA]</scope>
    <source>
        <strain>ATCC 43587 / DSM 3638 / JCM 8422 / Vc1</strain>
    </source>
</reference>